<dbReference type="EC" id="2.7.7.3" evidence="1"/>
<dbReference type="EMBL" id="FM204883">
    <property type="protein sequence ID" value="CAW92897.1"/>
    <property type="molecule type" value="Genomic_DNA"/>
</dbReference>
<dbReference type="RefSeq" id="WP_012679160.1">
    <property type="nucleotide sequence ID" value="NC_012471.1"/>
</dbReference>
<dbReference type="SMR" id="C0MBZ1"/>
<dbReference type="KEGG" id="seu:SEQ_0605"/>
<dbReference type="HOGENOM" id="CLU_100149_0_1_9"/>
<dbReference type="OrthoDB" id="9806661at2"/>
<dbReference type="UniPathway" id="UPA00241">
    <property type="reaction ID" value="UER00355"/>
</dbReference>
<dbReference type="Proteomes" id="UP000001365">
    <property type="component" value="Chromosome"/>
</dbReference>
<dbReference type="GO" id="GO:0005737">
    <property type="term" value="C:cytoplasm"/>
    <property type="evidence" value="ECO:0007669"/>
    <property type="project" value="UniProtKB-SubCell"/>
</dbReference>
<dbReference type="GO" id="GO:0005524">
    <property type="term" value="F:ATP binding"/>
    <property type="evidence" value="ECO:0007669"/>
    <property type="project" value="UniProtKB-KW"/>
</dbReference>
<dbReference type="GO" id="GO:0004595">
    <property type="term" value="F:pantetheine-phosphate adenylyltransferase activity"/>
    <property type="evidence" value="ECO:0007669"/>
    <property type="project" value="UniProtKB-UniRule"/>
</dbReference>
<dbReference type="GO" id="GO:0015937">
    <property type="term" value="P:coenzyme A biosynthetic process"/>
    <property type="evidence" value="ECO:0007669"/>
    <property type="project" value="UniProtKB-UniRule"/>
</dbReference>
<dbReference type="CDD" id="cd02163">
    <property type="entry name" value="PPAT"/>
    <property type="match status" value="1"/>
</dbReference>
<dbReference type="Gene3D" id="3.40.50.620">
    <property type="entry name" value="HUPs"/>
    <property type="match status" value="1"/>
</dbReference>
<dbReference type="HAMAP" id="MF_00151">
    <property type="entry name" value="PPAT_bact"/>
    <property type="match status" value="1"/>
</dbReference>
<dbReference type="InterPro" id="IPR004821">
    <property type="entry name" value="Cyt_trans-like"/>
</dbReference>
<dbReference type="InterPro" id="IPR001980">
    <property type="entry name" value="PPAT"/>
</dbReference>
<dbReference type="InterPro" id="IPR014729">
    <property type="entry name" value="Rossmann-like_a/b/a_fold"/>
</dbReference>
<dbReference type="NCBIfam" id="TIGR01510">
    <property type="entry name" value="coaD_prev_kdtB"/>
    <property type="match status" value="1"/>
</dbReference>
<dbReference type="NCBIfam" id="TIGR00125">
    <property type="entry name" value="cyt_tran_rel"/>
    <property type="match status" value="1"/>
</dbReference>
<dbReference type="PANTHER" id="PTHR21342">
    <property type="entry name" value="PHOSPHOPANTETHEINE ADENYLYLTRANSFERASE"/>
    <property type="match status" value="1"/>
</dbReference>
<dbReference type="PANTHER" id="PTHR21342:SF1">
    <property type="entry name" value="PHOSPHOPANTETHEINE ADENYLYLTRANSFERASE"/>
    <property type="match status" value="1"/>
</dbReference>
<dbReference type="Pfam" id="PF01467">
    <property type="entry name" value="CTP_transf_like"/>
    <property type="match status" value="1"/>
</dbReference>
<dbReference type="PRINTS" id="PR01020">
    <property type="entry name" value="LPSBIOSNTHSS"/>
</dbReference>
<dbReference type="SUPFAM" id="SSF52374">
    <property type="entry name" value="Nucleotidylyl transferase"/>
    <property type="match status" value="1"/>
</dbReference>
<accession>C0MBZ1</accession>
<evidence type="ECO:0000255" key="1">
    <source>
        <dbReference type="HAMAP-Rule" id="MF_00151"/>
    </source>
</evidence>
<proteinExistence type="inferred from homology"/>
<protein>
    <recommendedName>
        <fullName evidence="1">Phosphopantetheine adenylyltransferase</fullName>
        <ecNumber evidence="1">2.7.7.3</ecNumber>
    </recommendedName>
    <alternativeName>
        <fullName evidence="1">Dephospho-CoA pyrophosphorylase</fullName>
    </alternativeName>
    <alternativeName>
        <fullName evidence="1">Pantetheine-phosphate adenylyltransferase</fullName>
        <shortName evidence="1">PPAT</shortName>
    </alternativeName>
</protein>
<organism>
    <name type="scientific">Streptococcus equi subsp. equi (strain 4047)</name>
    <dbReference type="NCBI Taxonomy" id="553482"/>
    <lineage>
        <taxon>Bacteria</taxon>
        <taxon>Bacillati</taxon>
        <taxon>Bacillota</taxon>
        <taxon>Bacilli</taxon>
        <taxon>Lactobacillales</taxon>
        <taxon>Streptococcaceae</taxon>
        <taxon>Streptococcus</taxon>
    </lineage>
</organism>
<sequence>MSGKIGLYTGSFDPVTNGHMDMIKRASHLFEHVYVGIFNNPNKQSFFTFELRAQMLSEAVCALPNVTVVSAEHGLAVDLARELSVTHLIRGLRNTADFDYEIGLEYFNHRLAPDIETIYLMATHDLQPVSSSRIRELIAFRAPITGLVPQAVINQVEKMNENNKKN</sequence>
<name>COAD_STRE4</name>
<comment type="function">
    <text evidence="1">Reversibly transfers an adenylyl group from ATP to 4'-phosphopantetheine, yielding dephospho-CoA (dPCoA) and pyrophosphate.</text>
</comment>
<comment type="catalytic activity">
    <reaction evidence="1">
        <text>(R)-4'-phosphopantetheine + ATP + H(+) = 3'-dephospho-CoA + diphosphate</text>
        <dbReference type="Rhea" id="RHEA:19801"/>
        <dbReference type="ChEBI" id="CHEBI:15378"/>
        <dbReference type="ChEBI" id="CHEBI:30616"/>
        <dbReference type="ChEBI" id="CHEBI:33019"/>
        <dbReference type="ChEBI" id="CHEBI:57328"/>
        <dbReference type="ChEBI" id="CHEBI:61723"/>
        <dbReference type="EC" id="2.7.7.3"/>
    </reaction>
</comment>
<comment type="cofactor">
    <cofactor evidence="1">
        <name>Mg(2+)</name>
        <dbReference type="ChEBI" id="CHEBI:18420"/>
    </cofactor>
</comment>
<comment type="pathway">
    <text evidence="1">Cofactor biosynthesis; coenzyme A biosynthesis; CoA from (R)-pantothenate: step 4/5.</text>
</comment>
<comment type="subunit">
    <text evidence="1">Homohexamer.</text>
</comment>
<comment type="subcellular location">
    <subcellularLocation>
        <location evidence="1">Cytoplasm</location>
    </subcellularLocation>
</comment>
<comment type="similarity">
    <text evidence="1">Belongs to the bacterial CoaD family.</text>
</comment>
<keyword id="KW-0067">ATP-binding</keyword>
<keyword id="KW-0173">Coenzyme A biosynthesis</keyword>
<keyword id="KW-0963">Cytoplasm</keyword>
<keyword id="KW-0460">Magnesium</keyword>
<keyword id="KW-0547">Nucleotide-binding</keyword>
<keyword id="KW-0548">Nucleotidyltransferase</keyword>
<keyword id="KW-0808">Transferase</keyword>
<feature type="chain" id="PRO_1000123301" description="Phosphopantetheine adenylyltransferase">
    <location>
        <begin position="1"/>
        <end position="166"/>
    </location>
</feature>
<feature type="binding site" evidence="1">
    <location>
        <begin position="11"/>
        <end position="12"/>
    </location>
    <ligand>
        <name>ATP</name>
        <dbReference type="ChEBI" id="CHEBI:30616"/>
    </ligand>
</feature>
<feature type="binding site" evidence="1">
    <location>
        <position position="11"/>
    </location>
    <ligand>
        <name>substrate</name>
    </ligand>
</feature>
<feature type="binding site" evidence="1">
    <location>
        <position position="19"/>
    </location>
    <ligand>
        <name>ATP</name>
        <dbReference type="ChEBI" id="CHEBI:30616"/>
    </ligand>
</feature>
<feature type="binding site" evidence="1">
    <location>
        <position position="43"/>
    </location>
    <ligand>
        <name>substrate</name>
    </ligand>
</feature>
<feature type="binding site" evidence="1">
    <location>
        <position position="76"/>
    </location>
    <ligand>
        <name>substrate</name>
    </ligand>
</feature>
<feature type="binding site" evidence="1">
    <location>
        <position position="90"/>
    </location>
    <ligand>
        <name>substrate</name>
    </ligand>
</feature>
<feature type="binding site" evidence="1">
    <location>
        <begin position="91"/>
        <end position="93"/>
    </location>
    <ligand>
        <name>ATP</name>
        <dbReference type="ChEBI" id="CHEBI:30616"/>
    </ligand>
</feature>
<feature type="binding site" evidence="1">
    <location>
        <position position="101"/>
    </location>
    <ligand>
        <name>ATP</name>
        <dbReference type="ChEBI" id="CHEBI:30616"/>
    </ligand>
</feature>
<feature type="binding site" evidence="1">
    <location>
        <begin position="126"/>
        <end position="132"/>
    </location>
    <ligand>
        <name>ATP</name>
        <dbReference type="ChEBI" id="CHEBI:30616"/>
    </ligand>
</feature>
<feature type="site" description="Transition state stabilizer" evidence="1">
    <location>
        <position position="19"/>
    </location>
</feature>
<reference key="1">
    <citation type="journal article" date="2009" name="PLoS Pathog.">
        <title>Genomic evidence for the evolution of Streptococcus equi: host restriction, increased virulence, and genetic exchange with human pathogens.</title>
        <authorList>
            <person name="Holden M.T.G."/>
            <person name="Heather Z."/>
            <person name="Paillot R."/>
            <person name="Steward K.F."/>
            <person name="Webb K."/>
            <person name="Ainslie F."/>
            <person name="Jourdan T."/>
            <person name="Bason N.C."/>
            <person name="Holroyd N.E."/>
            <person name="Mungall K."/>
            <person name="Quail M.A."/>
            <person name="Sanders M."/>
            <person name="Simmonds M."/>
            <person name="Willey D."/>
            <person name="Brooks K."/>
            <person name="Aanensen D.M."/>
            <person name="Spratt B.G."/>
            <person name="Jolley K.A."/>
            <person name="Maiden M.C.J."/>
            <person name="Kehoe M."/>
            <person name="Chanter N."/>
            <person name="Bentley S.D."/>
            <person name="Robinson C."/>
            <person name="Maskell D.J."/>
            <person name="Parkhill J."/>
            <person name="Waller A.S."/>
        </authorList>
    </citation>
    <scope>NUCLEOTIDE SEQUENCE [LARGE SCALE GENOMIC DNA]</scope>
    <source>
        <strain>4047</strain>
    </source>
</reference>
<gene>
    <name evidence="1" type="primary">coaD</name>
    <name type="ordered locus">SEQ_0605</name>
</gene>